<feature type="chain" id="PRO_0000437275" description="Protein SODIUM POTASSIUM ROOT DEFECTIVE 3">
    <location>
        <begin position="1"/>
        <end position="247"/>
    </location>
</feature>
<feature type="domain" description="HMA" evidence="1">
    <location>
        <begin position="167"/>
        <end position="235"/>
    </location>
</feature>
<feature type="region of interest" description="Disordered" evidence="2">
    <location>
        <begin position="130"/>
        <end position="166"/>
    </location>
</feature>
<feature type="binding site" evidence="1">
    <location>
        <position position="180"/>
    </location>
    <ligand>
        <name>a metal cation</name>
        <dbReference type="ChEBI" id="CHEBI:25213"/>
    </ligand>
</feature>
<feature type="binding site" evidence="1">
    <location>
        <position position="183"/>
    </location>
    <ligand>
        <name>a metal cation</name>
        <dbReference type="ChEBI" id="CHEBI:25213"/>
    </ligand>
</feature>
<feature type="splice variant" id="VSP_058511" description="In isoform 2.">
    <original>Q</original>
    <variation>QV</variation>
    <location>
        <position position="195"/>
    </location>
</feature>
<organism evidence="8">
    <name type="scientific">Arabidopsis thaliana</name>
    <name type="common">Mouse-ear cress</name>
    <dbReference type="NCBI Taxonomy" id="3702"/>
    <lineage>
        <taxon>Eukaryota</taxon>
        <taxon>Viridiplantae</taxon>
        <taxon>Streptophyta</taxon>
        <taxon>Embryophyta</taxon>
        <taxon>Tracheophyta</taxon>
        <taxon>Spermatophyta</taxon>
        <taxon>Magnoliopsida</taxon>
        <taxon>eudicotyledons</taxon>
        <taxon>Gunneridae</taxon>
        <taxon>Pentapetalae</taxon>
        <taxon>rosids</taxon>
        <taxon>malvids</taxon>
        <taxon>Brassicales</taxon>
        <taxon>Brassicaceae</taxon>
        <taxon>Camelineae</taxon>
        <taxon>Arabidopsis</taxon>
    </lineage>
</organism>
<dbReference type="EMBL" id="AL132966">
    <property type="protein sequence ID" value="CAB67660.1"/>
    <property type="status" value="ALT_SEQ"/>
    <property type="molecule type" value="Genomic_DNA"/>
</dbReference>
<dbReference type="EMBL" id="CP002686">
    <property type="protein sequence ID" value="AEE79104.1"/>
    <property type="molecule type" value="Genomic_DNA"/>
</dbReference>
<dbReference type="EMBL" id="CP002686">
    <property type="protein sequence ID" value="AEE79105.1"/>
    <property type="molecule type" value="Genomic_DNA"/>
</dbReference>
<dbReference type="EMBL" id="AY080885">
    <property type="protein sequence ID" value="AAL87355.1"/>
    <property type="molecule type" value="mRNA"/>
</dbReference>
<dbReference type="EMBL" id="AY113972">
    <property type="protein sequence ID" value="AAM45020.1"/>
    <property type="molecule type" value="mRNA"/>
</dbReference>
<dbReference type="PIR" id="T45893">
    <property type="entry name" value="T45893"/>
</dbReference>
<dbReference type="RefSeq" id="NP_001030852.1">
    <molecule id="Q8RXH8-2"/>
    <property type="nucleotide sequence ID" value="NM_001035775.2"/>
</dbReference>
<dbReference type="RefSeq" id="NP_190921.2">
    <molecule id="Q8RXH8-1"/>
    <property type="nucleotide sequence ID" value="NM_115213.4"/>
</dbReference>
<dbReference type="SMR" id="Q8RXH8"/>
<dbReference type="FunCoup" id="Q8RXH8">
    <property type="interactions" value="80"/>
</dbReference>
<dbReference type="STRING" id="3702.Q8RXH8"/>
<dbReference type="iPTMnet" id="Q8RXH8"/>
<dbReference type="PaxDb" id="3702-AT3G53530.2"/>
<dbReference type="ProteomicsDB" id="251044">
    <molecule id="Q8RXH8-1"/>
</dbReference>
<dbReference type="EnsemblPlants" id="AT3G53530.1">
    <molecule id="Q8RXH8-1"/>
    <property type="protein sequence ID" value="AT3G53530.1"/>
    <property type="gene ID" value="AT3G53530"/>
</dbReference>
<dbReference type="EnsemblPlants" id="AT3G53530.2">
    <molecule id="Q8RXH8-2"/>
    <property type="protein sequence ID" value="AT3G53530.2"/>
    <property type="gene ID" value="AT3G53530"/>
</dbReference>
<dbReference type="GeneID" id="824521"/>
<dbReference type="Gramene" id="AT3G53530.1">
    <molecule id="Q8RXH8-1"/>
    <property type="protein sequence ID" value="AT3G53530.1"/>
    <property type="gene ID" value="AT3G53530"/>
</dbReference>
<dbReference type="Gramene" id="AT3G53530.2">
    <molecule id="Q8RXH8-2"/>
    <property type="protein sequence ID" value="AT3G53530.2"/>
    <property type="gene ID" value="AT3G53530"/>
</dbReference>
<dbReference type="KEGG" id="ath:AT3G53530"/>
<dbReference type="Araport" id="AT3G53530"/>
<dbReference type="TAIR" id="AT3G53530">
    <property type="gene designation" value="NAKR3"/>
</dbReference>
<dbReference type="eggNOG" id="KOG1603">
    <property type="taxonomic scope" value="Eukaryota"/>
</dbReference>
<dbReference type="HOGENOM" id="CLU_071922_0_1_1"/>
<dbReference type="InParanoid" id="Q8RXH8"/>
<dbReference type="OMA" id="KSIGCFD"/>
<dbReference type="PhylomeDB" id="Q8RXH8"/>
<dbReference type="PRO" id="PR:Q8RXH8"/>
<dbReference type="Proteomes" id="UP000006548">
    <property type="component" value="Chromosome 3"/>
</dbReference>
<dbReference type="ExpressionAtlas" id="Q8RXH8">
    <property type="expression patterns" value="baseline and differential"/>
</dbReference>
<dbReference type="GO" id="GO:0005737">
    <property type="term" value="C:cytoplasm"/>
    <property type="evidence" value="ECO:0007669"/>
    <property type="project" value="UniProtKB-SubCell"/>
</dbReference>
<dbReference type="GO" id="GO:0046872">
    <property type="term" value="F:metal ion binding"/>
    <property type="evidence" value="ECO:0007669"/>
    <property type="project" value="UniProtKB-KW"/>
</dbReference>
<dbReference type="CDD" id="cd00371">
    <property type="entry name" value="HMA"/>
    <property type="match status" value="1"/>
</dbReference>
<dbReference type="Gene3D" id="3.30.70.100">
    <property type="match status" value="1"/>
</dbReference>
<dbReference type="InterPro" id="IPR006121">
    <property type="entry name" value="HMA_dom"/>
</dbReference>
<dbReference type="InterPro" id="IPR036163">
    <property type="entry name" value="HMA_dom_sf"/>
</dbReference>
<dbReference type="InterPro" id="IPR044526">
    <property type="entry name" value="NAKR1-3"/>
</dbReference>
<dbReference type="InterPro" id="IPR016578">
    <property type="entry name" value="NAKR2/3"/>
</dbReference>
<dbReference type="PANTHER" id="PTHR46119">
    <property type="entry name" value="OS08G0405700 PROTEIN"/>
    <property type="match status" value="1"/>
</dbReference>
<dbReference type="PANTHER" id="PTHR46119:SF14">
    <property type="entry name" value="PROTEIN SODIUM POTASSIUM ROOT DEFECTIVE 3"/>
    <property type="match status" value="1"/>
</dbReference>
<dbReference type="Pfam" id="PF00403">
    <property type="entry name" value="HMA"/>
    <property type="match status" value="1"/>
</dbReference>
<dbReference type="PIRSF" id="PIRSF011221">
    <property type="entry name" value="Chloropl_CC_prd"/>
    <property type="match status" value="1"/>
</dbReference>
<dbReference type="SUPFAM" id="SSF55008">
    <property type="entry name" value="HMA, heavy metal-associated domain"/>
    <property type="match status" value="1"/>
</dbReference>
<dbReference type="PROSITE" id="PS50846">
    <property type="entry name" value="HMA_2"/>
    <property type="match status" value="1"/>
</dbReference>
<reference key="1">
    <citation type="journal article" date="2000" name="Nature">
        <title>Sequence and analysis of chromosome 3 of the plant Arabidopsis thaliana.</title>
        <authorList>
            <person name="Salanoubat M."/>
            <person name="Lemcke K."/>
            <person name="Rieger M."/>
            <person name="Ansorge W."/>
            <person name="Unseld M."/>
            <person name="Fartmann B."/>
            <person name="Valle G."/>
            <person name="Bloecker H."/>
            <person name="Perez-Alonso M."/>
            <person name="Obermaier B."/>
            <person name="Delseny M."/>
            <person name="Boutry M."/>
            <person name="Grivell L.A."/>
            <person name="Mache R."/>
            <person name="Puigdomenech P."/>
            <person name="De Simone V."/>
            <person name="Choisne N."/>
            <person name="Artiguenave F."/>
            <person name="Robert C."/>
            <person name="Brottier P."/>
            <person name="Wincker P."/>
            <person name="Cattolico L."/>
            <person name="Weissenbach J."/>
            <person name="Saurin W."/>
            <person name="Quetier F."/>
            <person name="Schaefer M."/>
            <person name="Mueller-Auer S."/>
            <person name="Gabel C."/>
            <person name="Fuchs M."/>
            <person name="Benes V."/>
            <person name="Wurmbach E."/>
            <person name="Drzonek H."/>
            <person name="Erfle H."/>
            <person name="Jordan N."/>
            <person name="Bangert S."/>
            <person name="Wiedelmann R."/>
            <person name="Kranz H."/>
            <person name="Voss H."/>
            <person name="Holland R."/>
            <person name="Brandt P."/>
            <person name="Nyakatura G."/>
            <person name="Vezzi A."/>
            <person name="D'Angelo M."/>
            <person name="Pallavicini A."/>
            <person name="Toppo S."/>
            <person name="Simionati B."/>
            <person name="Conrad A."/>
            <person name="Hornischer K."/>
            <person name="Kauer G."/>
            <person name="Loehnert T.-H."/>
            <person name="Nordsiek G."/>
            <person name="Reichelt J."/>
            <person name="Scharfe M."/>
            <person name="Schoen O."/>
            <person name="Bargues M."/>
            <person name="Terol J."/>
            <person name="Climent J."/>
            <person name="Navarro P."/>
            <person name="Collado C."/>
            <person name="Perez-Perez A."/>
            <person name="Ottenwaelder B."/>
            <person name="Duchemin D."/>
            <person name="Cooke R."/>
            <person name="Laudie M."/>
            <person name="Berger-Llauro C."/>
            <person name="Purnelle B."/>
            <person name="Masuy D."/>
            <person name="de Haan M."/>
            <person name="Maarse A.C."/>
            <person name="Alcaraz J.-P."/>
            <person name="Cottet A."/>
            <person name="Casacuberta E."/>
            <person name="Monfort A."/>
            <person name="Argiriou A."/>
            <person name="Flores M."/>
            <person name="Liguori R."/>
            <person name="Vitale D."/>
            <person name="Mannhaupt G."/>
            <person name="Haase D."/>
            <person name="Schoof H."/>
            <person name="Rudd S."/>
            <person name="Zaccaria P."/>
            <person name="Mewes H.-W."/>
            <person name="Mayer K.F.X."/>
            <person name="Kaul S."/>
            <person name="Town C.D."/>
            <person name="Koo H.L."/>
            <person name="Tallon L.J."/>
            <person name="Jenkins J."/>
            <person name="Rooney T."/>
            <person name="Rizzo M."/>
            <person name="Walts A."/>
            <person name="Utterback T."/>
            <person name="Fujii C.Y."/>
            <person name="Shea T.P."/>
            <person name="Creasy T.H."/>
            <person name="Haas B."/>
            <person name="Maiti R."/>
            <person name="Wu D."/>
            <person name="Peterson J."/>
            <person name="Van Aken S."/>
            <person name="Pai G."/>
            <person name="Militscher J."/>
            <person name="Sellers P."/>
            <person name="Gill J.E."/>
            <person name="Feldblyum T.V."/>
            <person name="Preuss D."/>
            <person name="Lin X."/>
            <person name="Nierman W.C."/>
            <person name="Salzberg S.L."/>
            <person name="White O."/>
            <person name="Venter J.C."/>
            <person name="Fraser C.M."/>
            <person name="Kaneko T."/>
            <person name="Nakamura Y."/>
            <person name="Sato S."/>
            <person name="Kato T."/>
            <person name="Asamizu E."/>
            <person name="Sasamoto S."/>
            <person name="Kimura T."/>
            <person name="Idesawa K."/>
            <person name="Kawashima K."/>
            <person name="Kishida Y."/>
            <person name="Kiyokawa C."/>
            <person name="Kohara M."/>
            <person name="Matsumoto M."/>
            <person name="Matsuno A."/>
            <person name="Muraki A."/>
            <person name="Nakayama S."/>
            <person name="Nakazaki N."/>
            <person name="Shinpo S."/>
            <person name="Takeuchi C."/>
            <person name="Wada T."/>
            <person name="Watanabe A."/>
            <person name="Yamada M."/>
            <person name="Yasuda M."/>
            <person name="Tabata S."/>
        </authorList>
    </citation>
    <scope>NUCLEOTIDE SEQUENCE [LARGE SCALE GENOMIC DNA]</scope>
    <source>
        <strain>cv. Columbia</strain>
    </source>
</reference>
<reference key="2">
    <citation type="journal article" date="2017" name="Plant J.">
        <title>Araport11: a complete reannotation of the Arabidopsis thaliana reference genome.</title>
        <authorList>
            <person name="Cheng C.Y."/>
            <person name="Krishnakumar V."/>
            <person name="Chan A.P."/>
            <person name="Thibaud-Nissen F."/>
            <person name="Schobel S."/>
            <person name="Town C.D."/>
        </authorList>
    </citation>
    <scope>GENOME REANNOTATION</scope>
    <source>
        <strain>cv. Columbia</strain>
    </source>
</reference>
<reference key="3">
    <citation type="journal article" date="2003" name="Science">
        <title>Empirical analysis of transcriptional activity in the Arabidopsis genome.</title>
        <authorList>
            <person name="Yamada K."/>
            <person name="Lim J."/>
            <person name="Dale J.M."/>
            <person name="Chen H."/>
            <person name="Shinn P."/>
            <person name="Palm C.J."/>
            <person name="Southwick A.M."/>
            <person name="Wu H.C."/>
            <person name="Kim C.J."/>
            <person name="Nguyen M."/>
            <person name="Pham P.K."/>
            <person name="Cheuk R.F."/>
            <person name="Karlin-Newmann G."/>
            <person name="Liu S.X."/>
            <person name="Lam B."/>
            <person name="Sakano H."/>
            <person name="Wu T."/>
            <person name="Yu G."/>
            <person name="Miranda M."/>
            <person name="Quach H.L."/>
            <person name="Tripp M."/>
            <person name="Chang C.H."/>
            <person name="Lee J.M."/>
            <person name="Toriumi M.J."/>
            <person name="Chan M.M."/>
            <person name="Tang C.C."/>
            <person name="Onodera C.S."/>
            <person name="Deng J.M."/>
            <person name="Akiyama K."/>
            <person name="Ansari Y."/>
            <person name="Arakawa T."/>
            <person name="Banh J."/>
            <person name="Banno F."/>
            <person name="Bowser L."/>
            <person name="Brooks S.Y."/>
            <person name="Carninci P."/>
            <person name="Chao Q."/>
            <person name="Choy N."/>
            <person name="Enju A."/>
            <person name="Goldsmith A.D."/>
            <person name="Gurjal M."/>
            <person name="Hansen N.F."/>
            <person name="Hayashizaki Y."/>
            <person name="Johnson-Hopson C."/>
            <person name="Hsuan V.W."/>
            <person name="Iida K."/>
            <person name="Karnes M."/>
            <person name="Khan S."/>
            <person name="Koesema E."/>
            <person name="Ishida J."/>
            <person name="Jiang P.X."/>
            <person name="Jones T."/>
            <person name="Kawai J."/>
            <person name="Kamiya A."/>
            <person name="Meyers C."/>
            <person name="Nakajima M."/>
            <person name="Narusaka M."/>
            <person name="Seki M."/>
            <person name="Sakurai T."/>
            <person name="Satou M."/>
            <person name="Tamse R."/>
            <person name="Vaysberg M."/>
            <person name="Wallender E.K."/>
            <person name="Wong C."/>
            <person name="Yamamura Y."/>
            <person name="Yuan S."/>
            <person name="Shinozaki K."/>
            <person name="Davis R.W."/>
            <person name="Theologis A."/>
            <person name="Ecker J.R."/>
        </authorList>
    </citation>
    <scope>NUCLEOTIDE SEQUENCE [LARGE SCALE MRNA] (ISOFORM 1)</scope>
    <source>
        <strain>cv. Columbia</strain>
    </source>
</reference>
<reference key="4">
    <citation type="journal article" date="2010" name="Plant Cell">
        <title>Arabidopsis NPCC6/NaKR1 is a phloem mobile metal binding protein necessary for phloem function and root meristem maintenance.</title>
        <authorList>
            <person name="Tian H."/>
            <person name="Baxter I.R."/>
            <person name="Lahner B."/>
            <person name="Reinders A."/>
            <person name="Salt D.E."/>
            <person name="Ward J.M."/>
        </authorList>
    </citation>
    <scope>GENE FAMILY</scope>
    <scope>NOMENCLATURE</scope>
</reference>
<reference key="5">
    <citation type="journal article" date="2013" name="FEBS J.">
        <title>Heavy metal-associated isoprenylated plant protein (HIPP): characterization of a family of proteins exclusive to plants.</title>
        <authorList>
            <person name="de Abreu-Neto J.B."/>
            <person name="Turchetto-Zolet A.C."/>
            <person name="de Oliveira L.F."/>
            <person name="Zanettini M.H."/>
            <person name="Margis-Pinheiro M."/>
        </authorList>
    </citation>
    <scope>GENE FAMILY</scope>
    <scope>NOMENCLATURE</scope>
</reference>
<reference key="6">
    <citation type="journal article" date="2016" name="Genet. Mol. Res.">
        <title>Overexpression of NaKR3 enhances salt tolerance in Arabidopsis.</title>
        <authorList>
            <person name="Luo Q."/>
            <person name="Zhao Z."/>
            <person name="Li D.K."/>
            <person name="Zhang Y."/>
            <person name="Xie L.F."/>
            <person name="Peng M.F."/>
            <person name="Yuan S."/>
            <person name="Yang Y."/>
        </authorList>
    </citation>
    <scope>FUNCTION</scope>
    <scope>INDUCTION BY SALT AND OSMOTIC STRESS</scope>
    <scope>SUBCELLULAR LOCATION</scope>
</reference>
<protein>
    <recommendedName>
        <fullName evidence="4">Protein SODIUM POTASSIUM ROOT DEFECTIVE 3</fullName>
        <shortName evidence="4">NaKR3</shortName>
    </recommendedName>
    <alternativeName>
        <fullName evidence="5">Heavy metal-associated plant protein 4</fullName>
        <shortName evidence="5">AtHPP04</shortName>
    </alternativeName>
</protein>
<accession>Q8RXH8</accession>
<accession>F4JAG5</accession>
<accession>Q9LFG6</accession>
<evidence type="ECO:0000255" key="1">
    <source>
        <dbReference type="PROSITE-ProRule" id="PRU00280"/>
    </source>
</evidence>
<evidence type="ECO:0000256" key="2">
    <source>
        <dbReference type="SAM" id="MobiDB-lite"/>
    </source>
</evidence>
<evidence type="ECO:0000269" key="3">
    <source>
    </source>
</evidence>
<evidence type="ECO:0000303" key="4">
    <source>
    </source>
</evidence>
<evidence type="ECO:0000303" key="5">
    <source>
    </source>
</evidence>
<evidence type="ECO:0000305" key="6"/>
<evidence type="ECO:0000312" key="7">
    <source>
        <dbReference type="Araport" id="AT3G53530"/>
    </source>
</evidence>
<evidence type="ECO:0000312" key="8">
    <source>
        <dbReference type="EMBL" id="AAL87355.1"/>
    </source>
</evidence>
<evidence type="ECO:0000312" key="9">
    <source>
        <dbReference type="EMBL" id="CAB67660.1"/>
    </source>
</evidence>
<comment type="function">
    <text evidence="3">Heavy metal-associated protein involved in salt tolerance.</text>
</comment>
<comment type="subcellular location">
    <subcellularLocation>
        <location evidence="3">Cytoplasm</location>
    </subcellularLocation>
</comment>
<comment type="alternative products">
    <event type="alternative splicing"/>
    <isoform>
        <id>Q8RXH8-1</id>
        <name>1</name>
        <sequence type="displayed"/>
    </isoform>
    <isoform>
        <id>Q8RXH8-2</id>
        <name>2</name>
        <sequence type="described" ref="VSP_058511"/>
    </isoform>
</comment>
<comment type="induction">
    <text evidence="3">Up-regulated by salt and osmotic stress.</text>
</comment>
<comment type="sequence caution" evidence="6">
    <conflict type="erroneous gene model prediction">
        <sequence resource="EMBL-CDS" id="CAB67660"/>
    </conflict>
</comment>
<sequence>MKAGMFYCASQASTATANGERTVTARAIDRHNPIIKDGRRSFTAPCSSGDDYVAPYRQLSKITRVPSSSGDGKSVQVDKGRRSNSGSLMKLISYDVSLARKSFGCVVATPKTPPGSTRYLLGSDPVSLAGSTGQDTVATEESEASAPKRGSSGPVEEKKKSSGSGSDQVVVLRVSLHCHCRGCQGKVKKHLSKMQGVTSFNIDFASKKVTVTGDITPLEVLGCLSKVKNAQFWTPPPPSIPRANPET</sequence>
<proteinExistence type="evidence at transcript level"/>
<gene>
    <name evidence="4" type="primary">NAKR3</name>
    <name evidence="5" type="synonym">HPP04</name>
    <name evidence="7" type="ordered locus">At3g53530</name>
    <name evidence="9" type="ORF">F4P12.230</name>
</gene>
<keyword id="KW-0025">Alternative splicing</keyword>
<keyword id="KW-0963">Cytoplasm</keyword>
<keyword id="KW-0479">Metal-binding</keyword>
<keyword id="KW-1185">Reference proteome</keyword>
<name>NAKR3_ARATH</name>